<gene>
    <name evidence="1" type="primary">mnmE</name>
    <name evidence="1" type="synonym">trmE</name>
    <name type="ordered locus">PsycPRwf_2387</name>
</gene>
<comment type="function">
    <text evidence="1">Exhibits a very high intrinsic GTPase hydrolysis rate. Involved in the addition of a carboxymethylaminomethyl (cmnm) group at the wobble position (U34) of certain tRNAs, forming tRNA-cmnm(5)s(2)U34.</text>
</comment>
<comment type="cofactor">
    <cofactor evidence="1">
        <name>K(+)</name>
        <dbReference type="ChEBI" id="CHEBI:29103"/>
    </cofactor>
    <text evidence="1">Binds 1 potassium ion per subunit.</text>
</comment>
<comment type="subunit">
    <text evidence="1">Homodimer. Heterotetramer of two MnmE and two MnmG subunits.</text>
</comment>
<comment type="subcellular location">
    <subcellularLocation>
        <location evidence="1">Cytoplasm</location>
    </subcellularLocation>
</comment>
<comment type="similarity">
    <text evidence="1">Belongs to the TRAFAC class TrmE-Era-EngA-EngB-Septin-like GTPase superfamily. TrmE GTPase family.</text>
</comment>
<evidence type="ECO:0000255" key="1">
    <source>
        <dbReference type="HAMAP-Rule" id="MF_00379"/>
    </source>
</evidence>
<sequence>MTHTTTIAAIATPVGRGGVGIIRLSGPKAYAIACALTGKESFTPRLASFCRFYDANNNVLDEGLVLYFKAPHSFTGEDVIELQGHGGMILQNQLLARVFELGAHQAQAGEFSYRAFDNDKLDLLQAEAIADAIDATSAAAASSAIRSLTGAFSNKINEVLEALIELRLYVEASIDFPDEEDVDFLSDGVIEGKLQRIQQQLTTILSTAQQGQLLRDGVHVVLAGRPNAGKSSLLNSLAGQERAIVTDVAGTTRDTLQETIVLNGLTIHLTDTAGLRDTTDAVERIGIERARTAINQADLLLLVYDLSQEVDPLKLASELFGEGIDGTPNFDPSKLLLIGNKRDLVEDKGESANKLADKADILGYEQVNVSCETSQGIPQLIASLCDKVGFHPPENSLIARTRHLDALRRTQQHVDEAHQQLVIYQAGELVAESLRQGQYSLGEITGEFSADDLLGRIFGSFCIGK</sequence>
<accession>A5WI36</accession>
<dbReference type="EC" id="3.6.-.-" evidence="1"/>
<dbReference type="EMBL" id="CP000713">
    <property type="protein sequence ID" value="ABQ95327.1"/>
    <property type="molecule type" value="Genomic_DNA"/>
</dbReference>
<dbReference type="SMR" id="A5WI36"/>
<dbReference type="STRING" id="349106.PsycPRwf_2387"/>
<dbReference type="KEGG" id="prw:PsycPRwf_2387"/>
<dbReference type="eggNOG" id="COG0486">
    <property type="taxonomic scope" value="Bacteria"/>
</dbReference>
<dbReference type="HOGENOM" id="CLU_019624_4_1_6"/>
<dbReference type="GO" id="GO:0005829">
    <property type="term" value="C:cytosol"/>
    <property type="evidence" value="ECO:0007669"/>
    <property type="project" value="TreeGrafter"/>
</dbReference>
<dbReference type="GO" id="GO:0005525">
    <property type="term" value="F:GTP binding"/>
    <property type="evidence" value="ECO:0007669"/>
    <property type="project" value="UniProtKB-UniRule"/>
</dbReference>
<dbReference type="GO" id="GO:0003924">
    <property type="term" value="F:GTPase activity"/>
    <property type="evidence" value="ECO:0007669"/>
    <property type="project" value="UniProtKB-UniRule"/>
</dbReference>
<dbReference type="GO" id="GO:0046872">
    <property type="term" value="F:metal ion binding"/>
    <property type="evidence" value="ECO:0007669"/>
    <property type="project" value="UniProtKB-KW"/>
</dbReference>
<dbReference type="GO" id="GO:0030488">
    <property type="term" value="P:tRNA methylation"/>
    <property type="evidence" value="ECO:0007669"/>
    <property type="project" value="TreeGrafter"/>
</dbReference>
<dbReference type="GO" id="GO:0002098">
    <property type="term" value="P:tRNA wobble uridine modification"/>
    <property type="evidence" value="ECO:0007669"/>
    <property type="project" value="TreeGrafter"/>
</dbReference>
<dbReference type="CDD" id="cd04164">
    <property type="entry name" value="trmE"/>
    <property type="match status" value="1"/>
</dbReference>
<dbReference type="CDD" id="cd14858">
    <property type="entry name" value="TrmE_N"/>
    <property type="match status" value="1"/>
</dbReference>
<dbReference type="FunFam" id="3.40.50.300:FF:001376">
    <property type="entry name" value="tRNA modification GTPase MnmE"/>
    <property type="match status" value="1"/>
</dbReference>
<dbReference type="Gene3D" id="3.40.50.300">
    <property type="entry name" value="P-loop containing nucleotide triphosphate hydrolases"/>
    <property type="match status" value="1"/>
</dbReference>
<dbReference type="Gene3D" id="3.30.1360.120">
    <property type="entry name" value="Probable tRNA modification gtpase trme, domain 1"/>
    <property type="match status" value="1"/>
</dbReference>
<dbReference type="Gene3D" id="1.20.120.430">
    <property type="entry name" value="tRNA modification GTPase MnmE domain 2"/>
    <property type="match status" value="1"/>
</dbReference>
<dbReference type="HAMAP" id="MF_00379">
    <property type="entry name" value="GTPase_MnmE"/>
    <property type="match status" value="1"/>
</dbReference>
<dbReference type="InterPro" id="IPR031168">
    <property type="entry name" value="G_TrmE"/>
</dbReference>
<dbReference type="InterPro" id="IPR006073">
    <property type="entry name" value="GTP-bd"/>
</dbReference>
<dbReference type="InterPro" id="IPR018948">
    <property type="entry name" value="GTP-bd_TrmE_N"/>
</dbReference>
<dbReference type="InterPro" id="IPR004520">
    <property type="entry name" value="GTPase_MnmE"/>
</dbReference>
<dbReference type="InterPro" id="IPR027368">
    <property type="entry name" value="MnmE_dom2"/>
</dbReference>
<dbReference type="InterPro" id="IPR025867">
    <property type="entry name" value="MnmE_helical"/>
</dbReference>
<dbReference type="InterPro" id="IPR027417">
    <property type="entry name" value="P-loop_NTPase"/>
</dbReference>
<dbReference type="InterPro" id="IPR005225">
    <property type="entry name" value="Small_GTP-bd"/>
</dbReference>
<dbReference type="InterPro" id="IPR027266">
    <property type="entry name" value="TrmE/GcvT_dom1"/>
</dbReference>
<dbReference type="NCBIfam" id="TIGR00450">
    <property type="entry name" value="mnmE_trmE_thdF"/>
    <property type="match status" value="1"/>
</dbReference>
<dbReference type="NCBIfam" id="NF003661">
    <property type="entry name" value="PRK05291.1-3"/>
    <property type="match status" value="1"/>
</dbReference>
<dbReference type="NCBIfam" id="TIGR00231">
    <property type="entry name" value="small_GTP"/>
    <property type="match status" value="1"/>
</dbReference>
<dbReference type="PANTHER" id="PTHR42714">
    <property type="entry name" value="TRNA MODIFICATION GTPASE GTPBP3"/>
    <property type="match status" value="1"/>
</dbReference>
<dbReference type="PANTHER" id="PTHR42714:SF2">
    <property type="entry name" value="TRNA MODIFICATION GTPASE GTPBP3, MITOCHONDRIAL"/>
    <property type="match status" value="1"/>
</dbReference>
<dbReference type="Pfam" id="PF01926">
    <property type="entry name" value="MMR_HSR1"/>
    <property type="match status" value="1"/>
</dbReference>
<dbReference type="Pfam" id="PF12631">
    <property type="entry name" value="MnmE_helical"/>
    <property type="match status" value="1"/>
</dbReference>
<dbReference type="Pfam" id="PF10396">
    <property type="entry name" value="TrmE_N"/>
    <property type="match status" value="1"/>
</dbReference>
<dbReference type="SUPFAM" id="SSF52540">
    <property type="entry name" value="P-loop containing nucleoside triphosphate hydrolases"/>
    <property type="match status" value="1"/>
</dbReference>
<dbReference type="SUPFAM" id="SSF116878">
    <property type="entry name" value="TrmE connector domain"/>
    <property type="match status" value="1"/>
</dbReference>
<dbReference type="PROSITE" id="PS51709">
    <property type="entry name" value="G_TRME"/>
    <property type="match status" value="1"/>
</dbReference>
<reference key="1">
    <citation type="submission" date="2007-05" db="EMBL/GenBank/DDBJ databases">
        <title>Complete sequence of chromosome of Psychrobacter sp. PRwf-1.</title>
        <authorList>
            <consortium name="US DOE Joint Genome Institute"/>
            <person name="Copeland A."/>
            <person name="Lucas S."/>
            <person name="Lapidus A."/>
            <person name="Barry K."/>
            <person name="Detter J.C."/>
            <person name="Glavina del Rio T."/>
            <person name="Hammon N."/>
            <person name="Israni S."/>
            <person name="Dalin E."/>
            <person name="Tice H."/>
            <person name="Pitluck S."/>
            <person name="Chain P."/>
            <person name="Malfatti S."/>
            <person name="Shin M."/>
            <person name="Vergez L."/>
            <person name="Schmutz J."/>
            <person name="Larimer F."/>
            <person name="Land M."/>
            <person name="Hauser L."/>
            <person name="Kyrpides N."/>
            <person name="Kim E."/>
            <person name="Tiedje J."/>
            <person name="Richardson P."/>
        </authorList>
    </citation>
    <scope>NUCLEOTIDE SEQUENCE [LARGE SCALE GENOMIC DNA]</scope>
    <source>
        <strain>PRwf-1</strain>
    </source>
</reference>
<proteinExistence type="inferred from homology"/>
<keyword id="KW-0963">Cytoplasm</keyword>
<keyword id="KW-0342">GTP-binding</keyword>
<keyword id="KW-0378">Hydrolase</keyword>
<keyword id="KW-0460">Magnesium</keyword>
<keyword id="KW-0479">Metal-binding</keyword>
<keyword id="KW-0547">Nucleotide-binding</keyword>
<keyword id="KW-0630">Potassium</keyword>
<keyword id="KW-0819">tRNA processing</keyword>
<organism>
    <name type="scientific">Psychrobacter sp. (strain PRwf-1)</name>
    <dbReference type="NCBI Taxonomy" id="349106"/>
    <lineage>
        <taxon>Bacteria</taxon>
        <taxon>Pseudomonadati</taxon>
        <taxon>Pseudomonadota</taxon>
        <taxon>Gammaproteobacteria</taxon>
        <taxon>Moraxellales</taxon>
        <taxon>Moraxellaceae</taxon>
        <taxon>Psychrobacter</taxon>
    </lineage>
</organism>
<feature type="chain" id="PRO_1000072168" description="tRNA modification GTPase MnmE">
    <location>
        <begin position="1"/>
        <end position="465"/>
    </location>
</feature>
<feature type="domain" description="TrmE-type G">
    <location>
        <begin position="217"/>
        <end position="389"/>
    </location>
</feature>
<feature type="binding site" evidence="1">
    <location>
        <position position="23"/>
    </location>
    <ligand>
        <name>(6S)-5-formyl-5,6,7,8-tetrahydrofolate</name>
        <dbReference type="ChEBI" id="CHEBI:57457"/>
    </ligand>
</feature>
<feature type="binding site" evidence="1">
    <location>
        <position position="81"/>
    </location>
    <ligand>
        <name>(6S)-5-formyl-5,6,7,8-tetrahydrofolate</name>
        <dbReference type="ChEBI" id="CHEBI:57457"/>
    </ligand>
</feature>
<feature type="binding site" evidence="1">
    <location>
        <position position="120"/>
    </location>
    <ligand>
        <name>(6S)-5-formyl-5,6,7,8-tetrahydrofolate</name>
        <dbReference type="ChEBI" id="CHEBI:57457"/>
    </ligand>
</feature>
<feature type="binding site" evidence="1">
    <location>
        <begin position="227"/>
        <end position="232"/>
    </location>
    <ligand>
        <name>GTP</name>
        <dbReference type="ChEBI" id="CHEBI:37565"/>
    </ligand>
</feature>
<feature type="binding site" evidence="1">
    <location>
        <position position="227"/>
    </location>
    <ligand>
        <name>K(+)</name>
        <dbReference type="ChEBI" id="CHEBI:29103"/>
    </ligand>
</feature>
<feature type="binding site" evidence="1">
    <location>
        <position position="231"/>
    </location>
    <ligand>
        <name>Mg(2+)</name>
        <dbReference type="ChEBI" id="CHEBI:18420"/>
    </ligand>
</feature>
<feature type="binding site" evidence="1">
    <location>
        <begin position="246"/>
        <end position="252"/>
    </location>
    <ligand>
        <name>GTP</name>
        <dbReference type="ChEBI" id="CHEBI:37565"/>
    </ligand>
</feature>
<feature type="binding site" evidence="1">
    <location>
        <position position="246"/>
    </location>
    <ligand>
        <name>K(+)</name>
        <dbReference type="ChEBI" id="CHEBI:29103"/>
    </ligand>
</feature>
<feature type="binding site" evidence="1">
    <location>
        <position position="248"/>
    </location>
    <ligand>
        <name>K(+)</name>
        <dbReference type="ChEBI" id="CHEBI:29103"/>
    </ligand>
</feature>
<feature type="binding site" evidence="1">
    <location>
        <position position="251"/>
    </location>
    <ligand>
        <name>K(+)</name>
        <dbReference type="ChEBI" id="CHEBI:29103"/>
    </ligand>
</feature>
<feature type="binding site" evidence="1">
    <location>
        <position position="252"/>
    </location>
    <ligand>
        <name>Mg(2+)</name>
        <dbReference type="ChEBI" id="CHEBI:18420"/>
    </ligand>
</feature>
<feature type="binding site" evidence="1">
    <location>
        <begin position="271"/>
        <end position="274"/>
    </location>
    <ligand>
        <name>GTP</name>
        <dbReference type="ChEBI" id="CHEBI:37565"/>
    </ligand>
</feature>
<feature type="binding site" evidence="1">
    <location>
        <position position="465"/>
    </location>
    <ligand>
        <name>(6S)-5-formyl-5,6,7,8-tetrahydrofolate</name>
        <dbReference type="ChEBI" id="CHEBI:57457"/>
    </ligand>
</feature>
<name>MNME_PSYWF</name>
<protein>
    <recommendedName>
        <fullName evidence="1">tRNA modification GTPase MnmE</fullName>
        <ecNumber evidence="1">3.6.-.-</ecNumber>
    </recommendedName>
</protein>